<protein>
    <recommendedName>
        <fullName>Cuticle protein 16 isoform D</fullName>
    </recommendedName>
    <alternativeName>
        <fullName>LpCP16d</fullName>
    </alternativeName>
</protein>
<proteinExistence type="evidence at protein level"/>
<sequence>EIFPFNVPEGKNDPAFLQNLQQEALNYINQQQVPNLEKHKAEELKVAAKERAAYNAGYY</sequence>
<keyword id="KW-0193">Cuticle</keyword>
<keyword id="KW-0903">Direct protein sequencing</keyword>
<feature type="chain" id="PRO_0000196181" description="Cuticle protein 16 isoform D">
    <location>
        <begin position="1"/>
        <end position="59" status="greater than"/>
    </location>
</feature>
<feature type="non-terminal residue" evidence="2">
    <location>
        <position position="59"/>
    </location>
</feature>
<organism evidence="2">
    <name type="scientific">Limulus polyphemus</name>
    <name type="common">Atlantic horseshoe crab</name>
    <dbReference type="NCBI Taxonomy" id="6850"/>
    <lineage>
        <taxon>Eukaryota</taxon>
        <taxon>Metazoa</taxon>
        <taxon>Ecdysozoa</taxon>
        <taxon>Arthropoda</taxon>
        <taxon>Chelicerata</taxon>
        <taxon>Merostomata</taxon>
        <taxon>Xiphosura</taxon>
        <taxon>Limulidae</taxon>
        <taxon>Limulus</taxon>
    </lineage>
</organism>
<evidence type="ECO:0000269" key="1">
    <source>
    </source>
</evidence>
<evidence type="ECO:0000305" key="2"/>
<comment type="mass spectrometry"/>
<reference key="1">
    <citation type="journal article" date="2003" name="Comp. Biochem. Physiol.">
        <title>Cuticular proteins from the horseshoe crab, Limulus polyphemus.</title>
        <authorList>
            <person name="Ditzel N."/>
            <person name="Andersen S.O."/>
            <person name="Hoejrup P."/>
        </authorList>
    </citation>
    <scope>PROTEIN SEQUENCE</scope>
    <scope>MASS SPECTROMETRY</scope>
    <source>
        <tissue>Carapace cuticle</tissue>
    </source>
</reference>
<name>CU16D_LIMPO</name>
<accession>P83352</accession>
<dbReference type="SMR" id="P83352"/>
<dbReference type="Proteomes" id="UP000694941">
    <property type="component" value="Unplaced"/>
</dbReference>
<dbReference type="GO" id="GO:0042302">
    <property type="term" value="F:structural constituent of cuticle"/>
    <property type="evidence" value="ECO:0007669"/>
    <property type="project" value="UniProtKB-KW"/>
</dbReference>